<sequence length="329" mass="35989">MVVMNKTNLLLLILSLFLAINLSSAQLRGDFYAGTCPNVEQIVRNAVQKKIQQTFTTIPATLRLYFHDCFVNGCDASVMIASTNTNKAEKDHEDNLSLAGDGFDTVIKAKEAVDAVPNCRNKVSCADILTMATRDVVNLAGGPQYAVELGRRDGLSSSASSVTGKLPKPTFDLNQLNALFAENGLSPNDMIALSGAHTLGFAHCTKVFNRLYNFNKTNNVDPTINKDYVTELKASCPQNIDPRVAINMDPNTPRQFDNVYYKNLQQGKGLFTSDQVLFTDSRSKPTVDLWANNGQLFNQAFISSMIKLGRVGVKTGSNGNIRRDCGAFN</sequence>
<dbReference type="EC" id="1.11.1.7"/>
<dbReference type="EMBL" id="AF469928">
    <property type="protein sequence ID" value="AAL79842.1"/>
    <property type="molecule type" value="mRNA"/>
</dbReference>
<dbReference type="EMBL" id="AL035601">
    <property type="status" value="NOT_ANNOTATED_CDS"/>
    <property type="molecule type" value="Genomic_DNA"/>
</dbReference>
<dbReference type="EMBL" id="AL035605">
    <property type="protein sequence ID" value="CAB38292.1"/>
    <property type="molecule type" value="Genomic_DNA"/>
</dbReference>
<dbReference type="EMBL" id="AL161591">
    <property type="protein sequence ID" value="CAB80418.1"/>
    <property type="molecule type" value="Genomic_DNA"/>
</dbReference>
<dbReference type="EMBL" id="CP002687">
    <property type="protein sequence ID" value="AEE86806.1"/>
    <property type="molecule type" value="Genomic_DNA"/>
</dbReference>
<dbReference type="EMBL" id="AY070459">
    <property type="protein sequence ID" value="AAL49862.1"/>
    <property type="molecule type" value="mRNA"/>
</dbReference>
<dbReference type="EMBL" id="AY150515">
    <property type="protein sequence ID" value="AAN13031.1"/>
    <property type="molecule type" value="mRNA"/>
</dbReference>
<dbReference type="PIR" id="T04710">
    <property type="entry name" value="T04710"/>
</dbReference>
<dbReference type="RefSeq" id="NP_195469.1">
    <molecule id="Q9SZE7-1"/>
    <property type="nucleotide sequence ID" value="NM_119917.3"/>
</dbReference>
<dbReference type="SMR" id="Q9SZE7"/>
<dbReference type="BioGRID" id="15189">
    <property type="interactions" value="1"/>
</dbReference>
<dbReference type="FunCoup" id="Q9SZE7">
    <property type="interactions" value="236"/>
</dbReference>
<dbReference type="IntAct" id="Q9SZE7">
    <property type="interactions" value="1"/>
</dbReference>
<dbReference type="STRING" id="3702.Q9SZE7"/>
<dbReference type="PeroxiBase" id="217">
    <property type="entry name" value="AtPrx51"/>
</dbReference>
<dbReference type="GlyCosmos" id="Q9SZE7">
    <property type="glycosylation" value="1 site, No reported glycans"/>
</dbReference>
<dbReference type="GlyGen" id="Q9SZE7">
    <property type="glycosylation" value="1 site"/>
</dbReference>
<dbReference type="PaxDb" id="3702-AT4G37530.1"/>
<dbReference type="ProteomicsDB" id="236783">
    <molecule id="Q9SZE7-1"/>
</dbReference>
<dbReference type="EnsemblPlants" id="AT4G37530.1">
    <molecule id="Q9SZE7-1"/>
    <property type="protein sequence ID" value="AT4G37530.1"/>
    <property type="gene ID" value="AT4G37530"/>
</dbReference>
<dbReference type="GeneID" id="829908"/>
<dbReference type="Gramene" id="AT4G37530.1">
    <molecule id="Q9SZE7-1"/>
    <property type="protein sequence ID" value="AT4G37530.1"/>
    <property type="gene ID" value="AT4G37530"/>
</dbReference>
<dbReference type="KEGG" id="ath:AT4G37530"/>
<dbReference type="Araport" id="AT4G37530"/>
<dbReference type="TAIR" id="AT4G37530"/>
<dbReference type="eggNOG" id="ENOG502QV9M">
    <property type="taxonomic scope" value="Eukaryota"/>
</dbReference>
<dbReference type="InParanoid" id="Q9SZE7"/>
<dbReference type="OMA" id="TWAKDNA"/>
<dbReference type="PhylomeDB" id="Q9SZE7"/>
<dbReference type="BioCyc" id="ARA:AT4G37530-MONOMER"/>
<dbReference type="PRO" id="PR:Q9SZE7"/>
<dbReference type="Proteomes" id="UP000006548">
    <property type="component" value="Chromosome 4"/>
</dbReference>
<dbReference type="ExpressionAtlas" id="Q9SZE7">
    <property type="expression patterns" value="baseline and differential"/>
</dbReference>
<dbReference type="GO" id="GO:0005576">
    <property type="term" value="C:extracellular region"/>
    <property type="evidence" value="ECO:0007669"/>
    <property type="project" value="UniProtKB-SubCell"/>
</dbReference>
<dbReference type="GO" id="GO:0020037">
    <property type="term" value="F:heme binding"/>
    <property type="evidence" value="ECO:0007669"/>
    <property type="project" value="InterPro"/>
</dbReference>
<dbReference type="GO" id="GO:0140825">
    <property type="term" value="F:lactoperoxidase activity"/>
    <property type="evidence" value="ECO:0007669"/>
    <property type="project" value="UniProtKB-EC"/>
</dbReference>
<dbReference type="GO" id="GO:0046872">
    <property type="term" value="F:metal ion binding"/>
    <property type="evidence" value="ECO:0007669"/>
    <property type="project" value="UniProtKB-KW"/>
</dbReference>
<dbReference type="GO" id="GO:0042744">
    <property type="term" value="P:hydrogen peroxide catabolic process"/>
    <property type="evidence" value="ECO:0007669"/>
    <property type="project" value="UniProtKB-KW"/>
</dbReference>
<dbReference type="GO" id="GO:0006979">
    <property type="term" value="P:response to oxidative stress"/>
    <property type="evidence" value="ECO:0007669"/>
    <property type="project" value="InterPro"/>
</dbReference>
<dbReference type="CDD" id="cd00693">
    <property type="entry name" value="secretory_peroxidase"/>
    <property type="match status" value="1"/>
</dbReference>
<dbReference type="FunFam" id="1.10.420.10:FF:000001">
    <property type="entry name" value="Peroxidase"/>
    <property type="match status" value="1"/>
</dbReference>
<dbReference type="FunFam" id="1.10.520.10:FF:000008">
    <property type="entry name" value="Peroxidase"/>
    <property type="match status" value="1"/>
</dbReference>
<dbReference type="Gene3D" id="1.10.520.10">
    <property type="match status" value="1"/>
</dbReference>
<dbReference type="Gene3D" id="1.10.420.10">
    <property type="entry name" value="Peroxidase, domain 2"/>
    <property type="match status" value="1"/>
</dbReference>
<dbReference type="InterPro" id="IPR002016">
    <property type="entry name" value="Haem_peroxidase"/>
</dbReference>
<dbReference type="InterPro" id="IPR010255">
    <property type="entry name" value="Haem_peroxidase_sf"/>
</dbReference>
<dbReference type="InterPro" id="IPR000823">
    <property type="entry name" value="Peroxidase_pln"/>
</dbReference>
<dbReference type="InterPro" id="IPR019793">
    <property type="entry name" value="Peroxidases_heam-ligand_BS"/>
</dbReference>
<dbReference type="InterPro" id="IPR033905">
    <property type="entry name" value="Secretory_peroxidase"/>
</dbReference>
<dbReference type="PANTHER" id="PTHR31517">
    <property type="match status" value="1"/>
</dbReference>
<dbReference type="PANTHER" id="PTHR31517:SF82">
    <property type="entry name" value="PEROXIDASE 50-RELATED"/>
    <property type="match status" value="1"/>
</dbReference>
<dbReference type="Pfam" id="PF00141">
    <property type="entry name" value="peroxidase"/>
    <property type="match status" value="1"/>
</dbReference>
<dbReference type="PRINTS" id="PR00458">
    <property type="entry name" value="PEROXIDASE"/>
</dbReference>
<dbReference type="PRINTS" id="PR00461">
    <property type="entry name" value="PLPEROXIDASE"/>
</dbReference>
<dbReference type="SUPFAM" id="SSF48113">
    <property type="entry name" value="Heme-dependent peroxidases"/>
    <property type="match status" value="1"/>
</dbReference>
<dbReference type="PROSITE" id="PS00435">
    <property type="entry name" value="PEROXIDASE_1"/>
    <property type="match status" value="1"/>
</dbReference>
<dbReference type="PROSITE" id="PS50873">
    <property type="entry name" value="PEROXIDASE_4"/>
    <property type="match status" value="1"/>
</dbReference>
<protein>
    <recommendedName>
        <fullName>Peroxidase 51</fullName>
        <shortName>Atperox P51</shortName>
        <ecNumber>1.11.1.7</ecNumber>
    </recommendedName>
    <alternativeName>
        <fullName>ATP37</fullName>
    </alternativeName>
</protein>
<feature type="signal peptide" evidence="1">
    <location>
        <begin position="1"/>
        <end position="25"/>
    </location>
</feature>
<feature type="chain" id="PRO_0000023716" description="Peroxidase 51">
    <location>
        <begin position="26"/>
        <end position="329"/>
    </location>
</feature>
<feature type="active site" description="Proton acceptor" evidence="2">
    <location>
        <position position="67"/>
    </location>
</feature>
<feature type="binding site" evidence="2">
    <location>
        <position position="68"/>
    </location>
    <ligand>
        <name>Ca(2+)</name>
        <dbReference type="ChEBI" id="CHEBI:29108"/>
        <label>1</label>
    </ligand>
</feature>
<feature type="binding site" evidence="2">
    <location>
        <position position="71"/>
    </location>
    <ligand>
        <name>Ca(2+)</name>
        <dbReference type="ChEBI" id="CHEBI:29108"/>
        <label>1</label>
    </ligand>
</feature>
<feature type="binding site" evidence="2">
    <location>
        <position position="73"/>
    </location>
    <ligand>
        <name>Ca(2+)</name>
        <dbReference type="ChEBI" id="CHEBI:29108"/>
        <label>1</label>
    </ligand>
</feature>
<feature type="binding site" evidence="2">
    <location>
        <position position="75"/>
    </location>
    <ligand>
        <name>Ca(2+)</name>
        <dbReference type="ChEBI" id="CHEBI:29108"/>
        <label>1</label>
    </ligand>
</feature>
<feature type="binding site" evidence="2">
    <location>
        <position position="77"/>
    </location>
    <ligand>
        <name>Ca(2+)</name>
        <dbReference type="ChEBI" id="CHEBI:29108"/>
        <label>1</label>
    </ligand>
</feature>
<feature type="binding site" evidence="2">
    <location>
        <position position="167"/>
    </location>
    <ligand>
        <name>substrate</name>
    </ligand>
</feature>
<feature type="binding site" description="axial binding residue" evidence="2">
    <location>
        <position position="197"/>
    </location>
    <ligand>
        <name>heme b</name>
        <dbReference type="ChEBI" id="CHEBI:60344"/>
    </ligand>
    <ligandPart>
        <name>Fe</name>
        <dbReference type="ChEBI" id="CHEBI:18248"/>
    </ligandPart>
</feature>
<feature type="binding site" evidence="2">
    <location>
        <position position="198"/>
    </location>
    <ligand>
        <name>Ca(2+)</name>
        <dbReference type="ChEBI" id="CHEBI:29108"/>
        <label>2</label>
    </ligand>
</feature>
<feature type="binding site" evidence="2">
    <location>
        <position position="249"/>
    </location>
    <ligand>
        <name>Ca(2+)</name>
        <dbReference type="ChEBI" id="CHEBI:29108"/>
        <label>2</label>
    </ligand>
</feature>
<feature type="binding site" evidence="2">
    <location>
        <position position="252"/>
    </location>
    <ligand>
        <name>Ca(2+)</name>
        <dbReference type="ChEBI" id="CHEBI:29108"/>
        <label>2</label>
    </ligand>
</feature>
<feature type="binding site" evidence="2">
    <location>
        <position position="257"/>
    </location>
    <ligand>
        <name>Ca(2+)</name>
        <dbReference type="ChEBI" id="CHEBI:29108"/>
        <label>2</label>
    </ligand>
</feature>
<feature type="site" description="Transition state stabilizer" evidence="2">
    <location>
        <position position="63"/>
    </location>
</feature>
<feature type="glycosylation site" description="N-linked (GlcNAc...) asparagine" evidence="1">
    <location>
        <position position="215"/>
    </location>
</feature>
<feature type="disulfide bond" evidence="2">
    <location>
        <begin position="36"/>
        <end position="119"/>
    </location>
</feature>
<feature type="disulfide bond" evidence="2">
    <location>
        <begin position="69"/>
        <end position="74"/>
    </location>
</feature>
<feature type="disulfide bond" evidence="2">
    <location>
        <begin position="125"/>
        <end position="325"/>
    </location>
</feature>
<feature type="disulfide bond" evidence="2">
    <location>
        <begin position="204"/>
        <end position="236"/>
    </location>
</feature>
<feature type="sequence conflict" description="In Ref. 4; AAL49862." evidence="3" ref="4">
    <original>F</original>
    <variation>L</variation>
    <location>
        <position position="31"/>
    </location>
</feature>
<comment type="function">
    <text>Removal of H(2)O(2), oxidation of toxic reductants, biosynthesis and degradation of lignin, suberization, auxin catabolism, response to environmental stresses such as wounding, pathogen attack and oxidative stress. These functions might be dependent on each isozyme/isoform in each plant tissue.</text>
</comment>
<comment type="catalytic activity">
    <reaction>
        <text>2 a phenolic donor + H2O2 = 2 a phenolic radical donor + 2 H2O</text>
        <dbReference type="Rhea" id="RHEA:56136"/>
        <dbReference type="ChEBI" id="CHEBI:15377"/>
        <dbReference type="ChEBI" id="CHEBI:16240"/>
        <dbReference type="ChEBI" id="CHEBI:139520"/>
        <dbReference type="ChEBI" id="CHEBI:139521"/>
        <dbReference type="EC" id="1.11.1.7"/>
    </reaction>
</comment>
<comment type="cofactor">
    <cofactor evidence="2">
        <name>heme b</name>
        <dbReference type="ChEBI" id="CHEBI:60344"/>
    </cofactor>
    <text evidence="2">Binds 1 heme b (iron(II)-protoporphyrin IX) group per subunit.</text>
</comment>
<comment type="cofactor">
    <cofactor evidence="2">
        <name>Ca(2+)</name>
        <dbReference type="ChEBI" id="CHEBI:29108"/>
    </cofactor>
    <text evidence="2">Binds 2 calcium ions per subunit.</text>
</comment>
<comment type="subcellular location">
    <subcellularLocation>
        <location evidence="2">Secreted</location>
    </subcellularLocation>
</comment>
<comment type="alternative products">
    <event type="alternative splicing"/>
    <isoform>
        <id>Q9SZE7-1</id>
        <name>1</name>
        <sequence type="displayed"/>
    </isoform>
    <text>A number of isoforms are produced. According to EST sequences.</text>
</comment>
<comment type="miscellaneous">
    <text>There are 73 peroxidase genes in A.thaliana.</text>
</comment>
<comment type="similarity">
    <text evidence="2">Belongs to the peroxidase family. Classical plant (class III) peroxidase subfamily.</text>
</comment>
<organism>
    <name type="scientific">Arabidopsis thaliana</name>
    <name type="common">Mouse-ear cress</name>
    <dbReference type="NCBI Taxonomy" id="3702"/>
    <lineage>
        <taxon>Eukaryota</taxon>
        <taxon>Viridiplantae</taxon>
        <taxon>Streptophyta</taxon>
        <taxon>Embryophyta</taxon>
        <taxon>Tracheophyta</taxon>
        <taxon>Spermatophyta</taxon>
        <taxon>Magnoliopsida</taxon>
        <taxon>eudicotyledons</taxon>
        <taxon>Gunneridae</taxon>
        <taxon>Pentapetalae</taxon>
        <taxon>rosids</taxon>
        <taxon>malvids</taxon>
        <taxon>Brassicales</taxon>
        <taxon>Brassicaceae</taxon>
        <taxon>Camelineae</taxon>
        <taxon>Arabidopsis</taxon>
    </lineage>
</organism>
<gene>
    <name type="primary">PER51</name>
    <name type="synonym">P51</name>
    <name type="ordered locus">At4g37530</name>
    <name type="ORF">F19F18.20</name>
    <name type="ORF">F6G17.2</name>
</gene>
<reference key="1">
    <citation type="journal article" date="2002" name="Eur. J. Biochem.">
        <title>Structural diversity and transcription of class III peroxidases from Arabidopsis thaliana.</title>
        <authorList>
            <person name="Welinder K.G."/>
            <person name="Justesen A.F."/>
            <person name="Kjaersgaard I.V.H."/>
            <person name="Jensen R.B."/>
            <person name="Rasmussen S.K."/>
            <person name="Jespersen H.M."/>
            <person name="Duroux L."/>
        </authorList>
    </citation>
    <scope>NUCLEOTIDE SEQUENCE [MRNA]</scope>
    <source>
        <strain>cv. Columbia</strain>
    </source>
</reference>
<reference key="2">
    <citation type="journal article" date="1999" name="Nature">
        <title>Sequence and analysis of chromosome 4 of the plant Arabidopsis thaliana.</title>
        <authorList>
            <person name="Mayer K.F.X."/>
            <person name="Schueller C."/>
            <person name="Wambutt R."/>
            <person name="Murphy G."/>
            <person name="Volckaert G."/>
            <person name="Pohl T."/>
            <person name="Duesterhoeft A."/>
            <person name="Stiekema W."/>
            <person name="Entian K.-D."/>
            <person name="Terryn N."/>
            <person name="Harris B."/>
            <person name="Ansorge W."/>
            <person name="Brandt P."/>
            <person name="Grivell L.A."/>
            <person name="Rieger M."/>
            <person name="Weichselgartner M."/>
            <person name="de Simone V."/>
            <person name="Obermaier B."/>
            <person name="Mache R."/>
            <person name="Mueller M."/>
            <person name="Kreis M."/>
            <person name="Delseny M."/>
            <person name="Puigdomenech P."/>
            <person name="Watson M."/>
            <person name="Schmidtheini T."/>
            <person name="Reichert B."/>
            <person name="Portetelle D."/>
            <person name="Perez-Alonso M."/>
            <person name="Boutry M."/>
            <person name="Bancroft I."/>
            <person name="Vos P."/>
            <person name="Hoheisel J."/>
            <person name="Zimmermann W."/>
            <person name="Wedler H."/>
            <person name="Ridley P."/>
            <person name="Langham S.-A."/>
            <person name="McCullagh B."/>
            <person name="Bilham L."/>
            <person name="Robben J."/>
            <person name="van der Schueren J."/>
            <person name="Grymonprez B."/>
            <person name="Chuang Y.-J."/>
            <person name="Vandenbussche F."/>
            <person name="Braeken M."/>
            <person name="Weltjens I."/>
            <person name="Voet M."/>
            <person name="Bastiaens I."/>
            <person name="Aert R."/>
            <person name="Defoor E."/>
            <person name="Weitzenegger T."/>
            <person name="Bothe G."/>
            <person name="Ramsperger U."/>
            <person name="Hilbert H."/>
            <person name="Braun M."/>
            <person name="Holzer E."/>
            <person name="Brandt A."/>
            <person name="Peters S."/>
            <person name="van Staveren M."/>
            <person name="Dirkse W."/>
            <person name="Mooijman P."/>
            <person name="Klein Lankhorst R."/>
            <person name="Rose M."/>
            <person name="Hauf J."/>
            <person name="Koetter P."/>
            <person name="Berneiser S."/>
            <person name="Hempel S."/>
            <person name="Feldpausch M."/>
            <person name="Lamberth S."/>
            <person name="Van den Daele H."/>
            <person name="De Keyser A."/>
            <person name="Buysshaert C."/>
            <person name="Gielen J."/>
            <person name="Villarroel R."/>
            <person name="De Clercq R."/>
            <person name="van Montagu M."/>
            <person name="Rogers J."/>
            <person name="Cronin A."/>
            <person name="Quail M.A."/>
            <person name="Bray-Allen S."/>
            <person name="Clark L."/>
            <person name="Doggett J."/>
            <person name="Hall S."/>
            <person name="Kay M."/>
            <person name="Lennard N."/>
            <person name="McLay K."/>
            <person name="Mayes R."/>
            <person name="Pettett A."/>
            <person name="Rajandream M.A."/>
            <person name="Lyne M."/>
            <person name="Benes V."/>
            <person name="Rechmann S."/>
            <person name="Borkova D."/>
            <person name="Bloecker H."/>
            <person name="Scharfe M."/>
            <person name="Grimm M."/>
            <person name="Loehnert T.-H."/>
            <person name="Dose S."/>
            <person name="de Haan M."/>
            <person name="Maarse A.C."/>
            <person name="Schaefer M."/>
            <person name="Mueller-Auer S."/>
            <person name="Gabel C."/>
            <person name="Fuchs M."/>
            <person name="Fartmann B."/>
            <person name="Granderath K."/>
            <person name="Dauner D."/>
            <person name="Herzl A."/>
            <person name="Neumann S."/>
            <person name="Argiriou A."/>
            <person name="Vitale D."/>
            <person name="Liguori R."/>
            <person name="Piravandi E."/>
            <person name="Massenet O."/>
            <person name="Quigley F."/>
            <person name="Clabauld G."/>
            <person name="Muendlein A."/>
            <person name="Felber R."/>
            <person name="Schnabl S."/>
            <person name="Hiller R."/>
            <person name="Schmidt W."/>
            <person name="Lecharny A."/>
            <person name="Aubourg S."/>
            <person name="Chefdor F."/>
            <person name="Cooke R."/>
            <person name="Berger C."/>
            <person name="Monfort A."/>
            <person name="Casacuberta E."/>
            <person name="Gibbons T."/>
            <person name="Weber N."/>
            <person name="Vandenbol M."/>
            <person name="Bargues M."/>
            <person name="Terol J."/>
            <person name="Torres A."/>
            <person name="Perez-Perez A."/>
            <person name="Purnelle B."/>
            <person name="Bent E."/>
            <person name="Johnson S."/>
            <person name="Tacon D."/>
            <person name="Jesse T."/>
            <person name="Heijnen L."/>
            <person name="Schwarz S."/>
            <person name="Scholler P."/>
            <person name="Heber S."/>
            <person name="Francs P."/>
            <person name="Bielke C."/>
            <person name="Frishman D."/>
            <person name="Haase D."/>
            <person name="Lemcke K."/>
            <person name="Mewes H.-W."/>
            <person name="Stocker S."/>
            <person name="Zaccaria P."/>
            <person name="Bevan M."/>
            <person name="Wilson R.K."/>
            <person name="de la Bastide M."/>
            <person name="Habermann K."/>
            <person name="Parnell L."/>
            <person name="Dedhia N."/>
            <person name="Gnoj L."/>
            <person name="Schutz K."/>
            <person name="Huang E."/>
            <person name="Spiegel L."/>
            <person name="Sekhon M."/>
            <person name="Murray J."/>
            <person name="Sheet P."/>
            <person name="Cordes M."/>
            <person name="Abu-Threideh J."/>
            <person name="Stoneking T."/>
            <person name="Kalicki J."/>
            <person name="Graves T."/>
            <person name="Harmon G."/>
            <person name="Edwards J."/>
            <person name="Latreille P."/>
            <person name="Courtney L."/>
            <person name="Cloud J."/>
            <person name="Abbott A."/>
            <person name="Scott K."/>
            <person name="Johnson D."/>
            <person name="Minx P."/>
            <person name="Bentley D."/>
            <person name="Fulton B."/>
            <person name="Miller N."/>
            <person name="Greco T."/>
            <person name="Kemp K."/>
            <person name="Kramer J."/>
            <person name="Fulton L."/>
            <person name="Mardis E."/>
            <person name="Dante M."/>
            <person name="Pepin K."/>
            <person name="Hillier L.W."/>
            <person name="Nelson J."/>
            <person name="Spieth J."/>
            <person name="Ryan E."/>
            <person name="Andrews S."/>
            <person name="Geisel C."/>
            <person name="Layman D."/>
            <person name="Du H."/>
            <person name="Ali J."/>
            <person name="Berghoff A."/>
            <person name="Jones K."/>
            <person name="Drone K."/>
            <person name="Cotton M."/>
            <person name="Joshu C."/>
            <person name="Antonoiu B."/>
            <person name="Zidanic M."/>
            <person name="Strong C."/>
            <person name="Sun H."/>
            <person name="Lamar B."/>
            <person name="Yordan C."/>
            <person name="Ma P."/>
            <person name="Zhong J."/>
            <person name="Preston R."/>
            <person name="Vil D."/>
            <person name="Shekher M."/>
            <person name="Matero A."/>
            <person name="Shah R."/>
            <person name="Swaby I.K."/>
            <person name="O'Shaughnessy A."/>
            <person name="Rodriguez M."/>
            <person name="Hoffman J."/>
            <person name="Till S."/>
            <person name="Granat S."/>
            <person name="Shohdy N."/>
            <person name="Hasegawa A."/>
            <person name="Hameed A."/>
            <person name="Lodhi M."/>
            <person name="Johnson A."/>
            <person name="Chen E."/>
            <person name="Marra M.A."/>
            <person name="Martienssen R."/>
            <person name="McCombie W.R."/>
        </authorList>
    </citation>
    <scope>NUCLEOTIDE SEQUENCE [LARGE SCALE GENOMIC DNA]</scope>
    <source>
        <strain>cv. Columbia</strain>
    </source>
</reference>
<reference key="3">
    <citation type="journal article" date="2017" name="Plant J.">
        <title>Araport11: a complete reannotation of the Arabidopsis thaliana reference genome.</title>
        <authorList>
            <person name="Cheng C.Y."/>
            <person name="Krishnakumar V."/>
            <person name="Chan A.P."/>
            <person name="Thibaud-Nissen F."/>
            <person name="Schobel S."/>
            <person name="Town C.D."/>
        </authorList>
    </citation>
    <scope>GENOME REANNOTATION</scope>
    <source>
        <strain>cv. Columbia</strain>
    </source>
</reference>
<reference key="4">
    <citation type="journal article" date="2003" name="Science">
        <title>Empirical analysis of transcriptional activity in the Arabidopsis genome.</title>
        <authorList>
            <person name="Yamada K."/>
            <person name="Lim J."/>
            <person name="Dale J.M."/>
            <person name="Chen H."/>
            <person name="Shinn P."/>
            <person name="Palm C.J."/>
            <person name="Southwick A.M."/>
            <person name="Wu H.C."/>
            <person name="Kim C.J."/>
            <person name="Nguyen M."/>
            <person name="Pham P.K."/>
            <person name="Cheuk R.F."/>
            <person name="Karlin-Newmann G."/>
            <person name="Liu S.X."/>
            <person name="Lam B."/>
            <person name="Sakano H."/>
            <person name="Wu T."/>
            <person name="Yu G."/>
            <person name="Miranda M."/>
            <person name="Quach H.L."/>
            <person name="Tripp M."/>
            <person name="Chang C.H."/>
            <person name="Lee J.M."/>
            <person name="Toriumi M.J."/>
            <person name="Chan M.M."/>
            <person name="Tang C.C."/>
            <person name="Onodera C.S."/>
            <person name="Deng J.M."/>
            <person name="Akiyama K."/>
            <person name="Ansari Y."/>
            <person name="Arakawa T."/>
            <person name="Banh J."/>
            <person name="Banno F."/>
            <person name="Bowser L."/>
            <person name="Brooks S.Y."/>
            <person name="Carninci P."/>
            <person name="Chao Q."/>
            <person name="Choy N."/>
            <person name="Enju A."/>
            <person name="Goldsmith A.D."/>
            <person name="Gurjal M."/>
            <person name="Hansen N.F."/>
            <person name="Hayashizaki Y."/>
            <person name="Johnson-Hopson C."/>
            <person name="Hsuan V.W."/>
            <person name="Iida K."/>
            <person name="Karnes M."/>
            <person name="Khan S."/>
            <person name="Koesema E."/>
            <person name="Ishida J."/>
            <person name="Jiang P.X."/>
            <person name="Jones T."/>
            <person name="Kawai J."/>
            <person name="Kamiya A."/>
            <person name="Meyers C."/>
            <person name="Nakajima M."/>
            <person name="Narusaka M."/>
            <person name="Seki M."/>
            <person name="Sakurai T."/>
            <person name="Satou M."/>
            <person name="Tamse R."/>
            <person name="Vaysberg M."/>
            <person name="Wallender E.K."/>
            <person name="Wong C."/>
            <person name="Yamamura Y."/>
            <person name="Yuan S."/>
            <person name="Shinozaki K."/>
            <person name="Davis R.W."/>
            <person name="Theologis A."/>
            <person name="Ecker J.R."/>
        </authorList>
    </citation>
    <scope>NUCLEOTIDE SEQUENCE [LARGE SCALE MRNA]</scope>
    <source>
        <strain>cv. Columbia</strain>
    </source>
</reference>
<reference key="5">
    <citation type="journal article" date="2002" name="Gene">
        <title>Analysis and expression of the class III peroxidase large gene family in Arabidopsis thaliana.</title>
        <authorList>
            <person name="Tognolli M."/>
            <person name="Penel C."/>
            <person name="Greppin H."/>
            <person name="Simon P."/>
        </authorList>
    </citation>
    <scope>GENE FAMILY ORGANIZATION</scope>
    <scope>NOMENCLATURE</scope>
    <source>
        <strain>cv. Columbia</strain>
    </source>
</reference>
<evidence type="ECO:0000255" key="1"/>
<evidence type="ECO:0000255" key="2">
    <source>
        <dbReference type="PROSITE-ProRule" id="PRU00297"/>
    </source>
</evidence>
<evidence type="ECO:0000305" key="3"/>
<accession>Q9SZE7</accession>
<accession>Q8VYK8</accession>
<name>PER51_ARATH</name>
<keyword id="KW-0025">Alternative splicing</keyword>
<keyword id="KW-0106">Calcium</keyword>
<keyword id="KW-1015">Disulfide bond</keyword>
<keyword id="KW-0325">Glycoprotein</keyword>
<keyword id="KW-0349">Heme</keyword>
<keyword id="KW-0376">Hydrogen peroxide</keyword>
<keyword id="KW-0408">Iron</keyword>
<keyword id="KW-0479">Metal-binding</keyword>
<keyword id="KW-0560">Oxidoreductase</keyword>
<keyword id="KW-0575">Peroxidase</keyword>
<keyword id="KW-1185">Reference proteome</keyword>
<keyword id="KW-0964">Secreted</keyword>
<keyword id="KW-0732">Signal</keyword>
<proteinExistence type="evidence at transcript level"/>